<feature type="chain" id="PRO_0000290558" description="1-(5-phosphoribosyl)-5-[(5-phosphoribosylamino)methylideneamino] imidazole-4-carboxamide isomerase">
    <location>
        <begin position="1"/>
        <end position="242"/>
    </location>
</feature>
<feature type="active site" description="Proton acceptor" evidence="1">
    <location>
        <position position="8"/>
    </location>
</feature>
<feature type="active site" description="Proton donor" evidence="1">
    <location>
        <position position="129"/>
    </location>
</feature>
<gene>
    <name evidence="1" type="primary">hisA</name>
    <name type="ordered locus">SYNAS_21830</name>
    <name type="ORF">SYN_00761</name>
</gene>
<sequence length="242" mass="25636">MVIIPAIDLKGGKCVRLLQGDFERVTVYSDHPVEMAKAWREKGAERLHLVDLDGSIAGNPRNAAIISQIVKSVGVPVEIGGGIRDISTIQRYLDMGVQWVILGTAALKDRSFVYNACDLFPGHVILGIDANNGKVAVEGWTEQSAITALELAISYENRGIAAVIYTDISRDGMQTGVNVEGTRVLAEAVDIPVIASGGVATLDDIKRLLPLEESGIAGVIIGKALYSGAIALEEAISLAKSS</sequence>
<dbReference type="EC" id="5.3.1.16" evidence="1"/>
<dbReference type="EMBL" id="CP000252">
    <property type="protein sequence ID" value="ABC78062.1"/>
    <property type="molecule type" value="Genomic_DNA"/>
</dbReference>
<dbReference type="RefSeq" id="WP_011418082.1">
    <property type="nucleotide sequence ID" value="NC_007759.1"/>
</dbReference>
<dbReference type="SMR" id="Q2LVE9"/>
<dbReference type="FunCoup" id="Q2LVE9">
    <property type="interactions" value="446"/>
</dbReference>
<dbReference type="STRING" id="56780.SYN_00761"/>
<dbReference type="KEGG" id="sat:SYN_00761"/>
<dbReference type="eggNOG" id="COG0106">
    <property type="taxonomic scope" value="Bacteria"/>
</dbReference>
<dbReference type="HOGENOM" id="CLU_048577_1_1_7"/>
<dbReference type="InParanoid" id="Q2LVE9"/>
<dbReference type="OrthoDB" id="9807749at2"/>
<dbReference type="UniPathway" id="UPA00031">
    <property type="reaction ID" value="UER00009"/>
</dbReference>
<dbReference type="Proteomes" id="UP000001933">
    <property type="component" value="Chromosome"/>
</dbReference>
<dbReference type="GO" id="GO:0005737">
    <property type="term" value="C:cytoplasm"/>
    <property type="evidence" value="ECO:0007669"/>
    <property type="project" value="UniProtKB-SubCell"/>
</dbReference>
<dbReference type="GO" id="GO:0003949">
    <property type="term" value="F:1-(5-phosphoribosyl)-5-[(5-phosphoribosylamino)methylideneamino]imidazole-4-carboxamide isomerase activity"/>
    <property type="evidence" value="ECO:0007669"/>
    <property type="project" value="UniProtKB-UniRule"/>
</dbReference>
<dbReference type="GO" id="GO:0000105">
    <property type="term" value="P:L-histidine biosynthetic process"/>
    <property type="evidence" value="ECO:0007669"/>
    <property type="project" value="UniProtKB-UniRule"/>
</dbReference>
<dbReference type="GO" id="GO:0000162">
    <property type="term" value="P:L-tryptophan biosynthetic process"/>
    <property type="evidence" value="ECO:0007669"/>
    <property type="project" value="TreeGrafter"/>
</dbReference>
<dbReference type="CDD" id="cd04732">
    <property type="entry name" value="HisA"/>
    <property type="match status" value="1"/>
</dbReference>
<dbReference type="FunFam" id="3.20.20.70:FF:000009">
    <property type="entry name" value="1-(5-phosphoribosyl)-5-[(5-phosphoribosylamino)methylideneamino] imidazole-4-carboxamide isomerase"/>
    <property type="match status" value="1"/>
</dbReference>
<dbReference type="Gene3D" id="3.20.20.70">
    <property type="entry name" value="Aldolase class I"/>
    <property type="match status" value="1"/>
</dbReference>
<dbReference type="HAMAP" id="MF_01014">
    <property type="entry name" value="HisA"/>
    <property type="match status" value="1"/>
</dbReference>
<dbReference type="InterPro" id="IPR013785">
    <property type="entry name" value="Aldolase_TIM"/>
</dbReference>
<dbReference type="InterPro" id="IPR006062">
    <property type="entry name" value="His_biosynth"/>
</dbReference>
<dbReference type="InterPro" id="IPR006063">
    <property type="entry name" value="HisA_bact_arch"/>
</dbReference>
<dbReference type="InterPro" id="IPR044524">
    <property type="entry name" value="Isoase_HisA-like"/>
</dbReference>
<dbReference type="InterPro" id="IPR023016">
    <property type="entry name" value="Isoase_HisA-like_bact"/>
</dbReference>
<dbReference type="InterPro" id="IPR011060">
    <property type="entry name" value="RibuloseP-bd_barrel"/>
</dbReference>
<dbReference type="NCBIfam" id="TIGR00007">
    <property type="entry name" value="1-(5-phosphoribosyl)-5-[(5-phosphoribosylamino)methylideneamino]imidazole-4-carboxamide isomerase"/>
    <property type="match status" value="1"/>
</dbReference>
<dbReference type="NCBIfam" id="NF010112">
    <property type="entry name" value="PRK13585.1"/>
    <property type="match status" value="1"/>
</dbReference>
<dbReference type="PANTHER" id="PTHR43090">
    <property type="entry name" value="1-(5-PHOSPHORIBOSYL)-5-[(5-PHOSPHORIBOSYLAMINO)METHYLIDENEAMINO] IMIDAZOLE-4-CARBOXAMIDE ISOMERASE"/>
    <property type="match status" value="1"/>
</dbReference>
<dbReference type="PANTHER" id="PTHR43090:SF2">
    <property type="entry name" value="1-(5-PHOSPHORIBOSYL)-5-[(5-PHOSPHORIBOSYLAMINO)METHYLIDENEAMINO] IMIDAZOLE-4-CARBOXAMIDE ISOMERASE"/>
    <property type="match status" value="1"/>
</dbReference>
<dbReference type="Pfam" id="PF00977">
    <property type="entry name" value="His_biosynth"/>
    <property type="match status" value="1"/>
</dbReference>
<dbReference type="SUPFAM" id="SSF51366">
    <property type="entry name" value="Ribulose-phoshate binding barrel"/>
    <property type="match status" value="1"/>
</dbReference>
<keyword id="KW-0028">Amino-acid biosynthesis</keyword>
<keyword id="KW-0963">Cytoplasm</keyword>
<keyword id="KW-0368">Histidine biosynthesis</keyword>
<keyword id="KW-0413">Isomerase</keyword>
<keyword id="KW-1185">Reference proteome</keyword>
<evidence type="ECO:0000255" key="1">
    <source>
        <dbReference type="HAMAP-Rule" id="MF_01014"/>
    </source>
</evidence>
<accession>Q2LVE9</accession>
<proteinExistence type="inferred from homology"/>
<comment type="catalytic activity">
    <reaction evidence="1">
        <text>1-(5-phospho-beta-D-ribosyl)-5-[(5-phospho-beta-D-ribosylamino)methylideneamino]imidazole-4-carboxamide = 5-[(5-phospho-1-deoxy-D-ribulos-1-ylimino)methylamino]-1-(5-phospho-beta-D-ribosyl)imidazole-4-carboxamide</text>
        <dbReference type="Rhea" id="RHEA:15469"/>
        <dbReference type="ChEBI" id="CHEBI:58435"/>
        <dbReference type="ChEBI" id="CHEBI:58525"/>
        <dbReference type="EC" id="5.3.1.16"/>
    </reaction>
</comment>
<comment type="pathway">
    <text evidence="1">Amino-acid biosynthesis; L-histidine biosynthesis; L-histidine from 5-phospho-alpha-D-ribose 1-diphosphate: step 4/9.</text>
</comment>
<comment type="subcellular location">
    <subcellularLocation>
        <location evidence="1">Cytoplasm</location>
    </subcellularLocation>
</comment>
<comment type="similarity">
    <text evidence="1">Belongs to the HisA/HisF family.</text>
</comment>
<protein>
    <recommendedName>
        <fullName evidence="1">1-(5-phosphoribosyl)-5-[(5-phosphoribosylamino)methylideneamino] imidazole-4-carboxamide isomerase</fullName>
        <ecNumber evidence="1">5.3.1.16</ecNumber>
    </recommendedName>
    <alternativeName>
        <fullName evidence="1">Phosphoribosylformimino-5-aminoimidazole carboxamide ribotide isomerase</fullName>
    </alternativeName>
</protein>
<organism>
    <name type="scientific">Syntrophus aciditrophicus (strain SB)</name>
    <dbReference type="NCBI Taxonomy" id="56780"/>
    <lineage>
        <taxon>Bacteria</taxon>
        <taxon>Pseudomonadati</taxon>
        <taxon>Thermodesulfobacteriota</taxon>
        <taxon>Syntrophia</taxon>
        <taxon>Syntrophales</taxon>
        <taxon>Syntrophaceae</taxon>
        <taxon>Syntrophus</taxon>
    </lineage>
</organism>
<name>HIS4_SYNAS</name>
<reference key="1">
    <citation type="journal article" date="2007" name="Proc. Natl. Acad. Sci. U.S.A.">
        <title>The genome of Syntrophus aciditrophicus: life at the thermodynamic limit of microbial growth.</title>
        <authorList>
            <person name="McInerney M.J."/>
            <person name="Rohlin L."/>
            <person name="Mouttaki H."/>
            <person name="Kim U."/>
            <person name="Krupp R.S."/>
            <person name="Rios-Hernandez L."/>
            <person name="Sieber J."/>
            <person name="Struchtemeyer C.G."/>
            <person name="Bhattacharyya A."/>
            <person name="Campbell J.W."/>
            <person name="Gunsalus R.P."/>
        </authorList>
    </citation>
    <scope>NUCLEOTIDE SEQUENCE [LARGE SCALE GENOMIC DNA]</scope>
    <source>
        <strain>SB</strain>
    </source>
</reference>